<keyword id="KW-1185">Reference proteome</keyword>
<accession>A9KKS7</accession>
<feature type="chain" id="PRO_1000198235" description="UPF0297 protein Cphy_2298">
    <location>
        <begin position="1"/>
        <end position="88"/>
    </location>
</feature>
<proteinExistence type="inferred from homology"/>
<sequence length="88" mass="10527">MQEINNTQYFRVQKQPEIVVKDVIDIVYLALTEKGYNPVNQIVGYIMSGDPTYITNHRNARSLIMKVERDEILEELMHYYIDNHLKRR</sequence>
<reference key="1">
    <citation type="submission" date="2007-11" db="EMBL/GenBank/DDBJ databases">
        <title>Complete genome sequence of Clostridium phytofermentans ISDg.</title>
        <authorList>
            <person name="Leschine S.B."/>
            <person name="Warnick T.A."/>
            <person name="Blanchard J.L."/>
            <person name="Schnell D.J."/>
            <person name="Petit E.L."/>
            <person name="LaTouf W.G."/>
            <person name="Copeland A."/>
            <person name="Lucas S."/>
            <person name="Lapidus A."/>
            <person name="Barry K."/>
            <person name="Glavina del Rio T."/>
            <person name="Dalin E."/>
            <person name="Tice H."/>
            <person name="Pitluck S."/>
            <person name="Kiss H."/>
            <person name="Brettin T."/>
            <person name="Bruce D."/>
            <person name="Detter J.C."/>
            <person name="Han C."/>
            <person name="Kuske C."/>
            <person name="Schmutz J."/>
            <person name="Larimer F."/>
            <person name="Land M."/>
            <person name="Hauser L."/>
            <person name="Kyrpides N."/>
            <person name="Kim E.A."/>
            <person name="Richardson P."/>
        </authorList>
    </citation>
    <scope>NUCLEOTIDE SEQUENCE [LARGE SCALE GENOMIC DNA]</scope>
    <source>
        <strain>ATCC 700394 / DSM 18823 / ISDg</strain>
    </source>
</reference>
<evidence type="ECO:0000255" key="1">
    <source>
        <dbReference type="HAMAP-Rule" id="MF_01507"/>
    </source>
</evidence>
<gene>
    <name type="ordered locus">Cphy_2298</name>
</gene>
<name>Y2298_LACP7</name>
<comment type="similarity">
    <text evidence="1">Belongs to the UPF0297 family.</text>
</comment>
<protein>
    <recommendedName>
        <fullName evidence="1">UPF0297 protein Cphy_2298</fullName>
    </recommendedName>
</protein>
<organism>
    <name type="scientific">Lachnoclostridium phytofermentans (strain ATCC 700394 / DSM 18823 / ISDg)</name>
    <name type="common">Clostridium phytofermentans</name>
    <dbReference type="NCBI Taxonomy" id="357809"/>
    <lineage>
        <taxon>Bacteria</taxon>
        <taxon>Bacillati</taxon>
        <taxon>Bacillota</taxon>
        <taxon>Clostridia</taxon>
        <taxon>Lachnospirales</taxon>
        <taxon>Lachnospiraceae</taxon>
    </lineage>
</organism>
<dbReference type="EMBL" id="CP000885">
    <property type="protein sequence ID" value="ABX42659.1"/>
    <property type="molecule type" value="Genomic_DNA"/>
</dbReference>
<dbReference type="RefSeq" id="WP_012200313.1">
    <property type="nucleotide sequence ID" value="NC_010001.1"/>
</dbReference>
<dbReference type="SMR" id="A9KKS7"/>
<dbReference type="STRING" id="357809.Cphy_2298"/>
<dbReference type="KEGG" id="cpy:Cphy_2298"/>
<dbReference type="eggNOG" id="COG4472">
    <property type="taxonomic scope" value="Bacteria"/>
</dbReference>
<dbReference type="HOGENOM" id="CLU_162466_0_0_9"/>
<dbReference type="OrthoDB" id="9796303at2"/>
<dbReference type="Proteomes" id="UP000000370">
    <property type="component" value="Chromosome"/>
</dbReference>
<dbReference type="HAMAP" id="MF_01507">
    <property type="entry name" value="UPF0297"/>
    <property type="match status" value="1"/>
</dbReference>
<dbReference type="InterPro" id="IPR009309">
    <property type="entry name" value="IreB"/>
</dbReference>
<dbReference type="NCBIfam" id="NF003997">
    <property type="entry name" value="PRK05473.1"/>
    <property type="match status" value="1"/>
</dbReference>
<dbReference type="PANTHER" id="PTHR40067">
    <property type="entry name" value="UPF0297 PROTEIN YRZL"/>
    <property type="match status" value="1"/>
</dbReference>
<dbReference type="PANTHER" id="PTHR40067:SF1">
    <property type="entry name" value="UPF0297 PROTEIN YRZL"/>
    <property type="match status" value="1"/>
</dbReference>
<dbReference type="Pfam" id="PF06135">
    <property type="entry name" value="IreB"/>
    <property type="match status" value="1"/>
</dbReference>
<dbReference type="PIRSF" id="PIRSF037258">
    <property type="entry name" value="DUF965_bac"/>
    <property type="match status" value="1"/>
</dbReference>